<gene>
    <name evidence="1" type="primary">gatA</name>
    <name type="ordered locus">PMT9312_0853</name>
</gene>
<reference key="1">
    <citation type="journal article" date="2006" name="Science">
        <title>Genomic islands and the ecology and evolution of Prochlorococcus.</title>
        <authorList>
            <person name="Coleman M.L."/>
            <person name="Sullivan M.B."/>
            <person name="Martiny A.C."/>
            <person name="Steglich C."/>
            <person name="Barry K."/>
            <person name="Delong E.F."/>
            <person name="Chisholm S.W."/>
        </authorList>
    </citation>
    <scope>NUCLEOTIDE SEQUENCE [LARGE SCALE GENOMIC DNA]</scope>
    <source>
        <strain>MIT 9312</strain>
    </source>
</reference>
<keyword id="KW-0067">ATP-binding</keyword>
<keyword id="KW-0436">Ligase</keyword>
<keyword id="KW-0547">Nucleotide-binding</keyword>
<keyword id="KW-0648">Protein biosynthesis</keyword>
<organism>
    <name type="scientific">Prochlorococcus marinus (strain MIT 9312)</name>
    <dbReference type="NCBI Taxonomy" id="74546"/>
    <lineage>
        <taxon>Bacteria</taxon>
        <taxon>Bacillati</taxon>
        <taxon>Cyanobacteriota</taxon>
        <taxon>Cyanophyceae</taxon>
        <taxon>Synechococcales</taxon>
        <taxon>Prochlorococcaceae</taxon>
        <taxon>Prochlorococcus</taxon>
    </lineage>
</organism>
<evidence type="ECO:0000255" key="1">
    <source>
        <dbReference type="HAMAP-Rule" id="MF_00120"/>
    </source>
</evidence>
<accession>Q31B32</accession>
<name>GATA_PROM9</name>
<sequence length="480" mass="51649">MDFNSLRKKIITKKASVKELVNDIFLKIDSDDPEINSYICTTKDNAIQQAENIDKLIQNEEILPPLAGMPIAIKDNICTKGVHTTCASKMLKGFIAPYESTASDKLWSSGGICLGKTNLDEFAMGSSTETSVFGVTSNPWDISRVPGGSSGGSAASVAAGLCSAAIGSDTGGSIRQPASFCGVVGLKPTYGRVSRWGLVAFASSLDQIGPITNTVSDAAEILYSISGKDPLDSTCLDQPVPNYLINLNKSIKDLKIGIIKECFEHPGLNTEVKDSVLCGVERFKNLGAEIIEVECPRFNDGIATYYVIAPSEASANLARYDGVKYGFRSEEGSNLIDMTSKSRAEGFGDEVQRRILIGTYALSAGYSDAYYKKAQKVRTLIRNDFDKAFKKVDILLTPTCPTTAFLKGDFSNDPLSMYLSDLLTVPANLAGLPAISIPCGFDTKGLPIGLQLIGNVLEEDKILNAAHIFEIDAQVIKNRL</sequence>
<dbReference type="EC" id="6.3.5.7" evidence="1"/>
<dbReference type="EMBL" id="CP000111">
    <property type="protein sequence ID" value="ABB49913.1"/>
    <property type="molecule type" value="Genomic_DNA"/>
</dbReference>
<dbReference type="RefSeq" id="WP_011376408.1">
    <property type="nucleotide sequence ID" value="NC_007577.1"/>
</dbReference>
<dbReference type="SMR" id="Q31B32"/>
<dbReference type="STRING" id="74546.PMT9312_0853"/>
<dbReference type="KEGG" id="pmi:PMT9312_0853"/>
<dbReference type="eggNOG" id="COG0154">
    <property type="taxonomic scope" value="Bacteria"/>
</dbReference>
<dbReference type="HOGENOM" id="CLU_009600_0_3_3"/>
<dbReference type="OrthoDB" id="9811471at2"/>
<dbReference type="Proteomes" id="UP000002715">
    <property type="component" value="Chromosome"/>
</dbReference>
<dbReference type="GO" id="GO:0030956">
    <property type="term" value="C:glutamyl-tRNA(Gln) amidotransferase complex"/>
    <property type="evidence" value="ECO:0007669"/>
    <property type="project" value="InterPro"/>
</dbReference>
<dbReference type="GO" id="GO:0005524">
    <property type="term" value="F:ATP binding"/>
    <property type="evidence" value="ECO:0007669"/>
    <property type="project" value="UniProtKB-KW"/>
</dbReference>
<dbReference type="GO" id="GO:0050567">
    <property type="term" value="F:glutaminyl-tRNA synthase (glutamine-hydrolyzing) activity"/>
    <property type="evidence" value="ECO:0007669"/>
    <property type="project" value="UniProtKB-UniRule"/>
</dbReference>
<dbReference type="GO" id="GO:0006412">
    <property type="term" value="P:translation"/>
    <property type="evidence" value="ECO:0007669"/>
    <property type="project" value="UniProtKB-UniRule"/>
</dbReference>
<dbReference type="Gene3D" id="3.90.1300.10">
    <property type="entry name" value="Amidase signature (AS) domain"/>
    <property type="match status" value="1"/>
</dbReference>
<dbReference type="HAMAP" id="MF_00120">
    <property type="entry name" value="GatA"/>
    <property type="match status" value="1"/>
</dbReference>
<dbReference type="InterPro" id="IPR000120">
    <property type="entry name" value="Amidase"/>
</dbReference>
<dbReference type="InterPro" id="IPR020556">
    <property type="entry name" value="Amidase_CS"/>
</dbReference>
<dbReference type="InterPro" id="IPR023631">
    <property type="entry name" value="Amidase_dom"/>
</dbReference>
<dbReference type="InterPro" id="IPR036928">
    <property type="entry name" value="AS_sf"/>
</dbReference>
<dbReference type="InterPro" id="IPR004412">
    <property type="entry name" value="GatA"/>
</dbReference>
<dbReference type="NCBIfam" id="TIGR00132">
    <property type="entry name" value="gatA"/>
    <property type="match status" value="1"/>
</dbReference>
<dbReference type="PANTHER" id="PTHR11895:SF151">
    <property type="entry name" value="GLUTAMYL-TRNA(GLN) AMIDOTRANSFERASE SUBUNIT A"/>
    <property type="match status" value="1"/>
</dbReference>
<dbReference type="PANTHER" id="PTHR11895">
    <property type="entry name" value="TRANSAMIDASE"/>
    <property type="match status" value="1"/>
</dbReference>
<dbReference type="Pfam" id="PF01425">
    <property type="entry name" value="Amidase"/>
    <property type="match status" value="1"/>
</dbReference>
<dbReference type="SUPFAM" id="SSF75304">
    <property type="entry name" value="Amidase signature (AS) enzymes"/>
    <property type="match status" value="1"/>
</dbReference>
<dbReference type="PROSITE" id="PS00571">
    <property type="entry name" value="AMIDASES"/>
    <property type="match status" value="1"/>
</dbReference>
<comment type="function">
    <text evidence="1">Allows the formation of correctly charged Gln-tRNA(Gln) through the transamidation of misacylated Glu-tRNA(Gln) in organisms which lack glutaminyl-tRNA synthetase. The reaction takes place in the presence of glutamine and ATP through an activated gamma-phospho-Glu-tRNA(Gln).</text>
</comment>
<comment type="catalytic activity">
    <reaction evidence="1">
        <text>L-glutamyl-tRNA(Gln) + L-glutamine + ATP + H2O = L-glutaminyl-tRNA(Gln) + L-glutamate + ADP + phosphate + H(+)</text>
        <dbReference type="Rhea" id="RHEA:17521"/>
        <dbReference type="Rhea" id="RHEA-COMP:9681"/>
        <dbReference type="Rhea" id="RHEA-COMP:9684"/>
        <dbReference type="ChEBI" id="CHEBI:15377"/>
        <dbReference type="ChEBI" id="CHEBI:15378"/>
        <dbReference type="ChEBI" id="CHEBI:29985"/>
        <dbReference type="ChEBI" id="CHEBI:30616"/>
        <dbReference type="ChEBI" id="CHEBI:43474"/>
        <dbReference type="ChEBI" id="CHEBI:58359"/>
        <dbReference type="ChEBI" id="CHEBI:78520"/>
        <dbReference type="ChEBI" id="CHEBI:78521"/>
        <dbReference type="ChEBI" id="CHEBI:456216"/>
        <dbReference type="EC" id="6.3.5.7"/>
    </reaction>
</comment>
<comment type="subunit">
    <text evidence="1">Heterotrimer of A, B and C subunits.</text>
</comment>
<comment type="similarity">
    <text evidence="1">Belongs to the amidase family. GatA subfamily.</text>
</comment>
<protein>
    <recommendedName>
        <fullName evidence="1">Glutamyl-tRNA(Gln) amidotransferase subunit A</fullName>
        <shortName evidence="1">Glu-ADT subunit A</shortName>
        <ecNumber evidence="1">6.3.5.7</ecNumber>
    </recommendedName>
</protein>
<proteinExistence type="inferred from homology"/>
<feature type="chain" id="PRO_0000241132" description="Glutamyl-tRNA(Gln) amidotransferase subunit A">
    <location>
        <begin position="1"/>
        <end position="480"/>
    </location>
</feature>
<feature type="active site" description="Charge relay system" evidence="1">
    <location>
        <position position="74"/>
    </location>
</feature>
<feature type="active site" description="Charge relay system" evidence="1">
    <location>
        <position position="149"/>
    </location>
</feature>
<feature type="active site" description="Acyl-ester intermediate" evidence="1">
    <location>
        <position position="173"/>
    </location>
</feature>